<evidence type="ECO:0000250" key="1"/>
<evidence type="ECO:0000250" key="2">
    <source>
        <dbReference type="UniProtKB" id="O35314"/>
    </source>
</evidence>
<evidence type="ECO:0000250" key="3">
    <source>
        <dbReference type="UniProtKB" id="P05060"/>
    </source>
</evidence>
<evidence type="ECO:0000250" key="4">
    <source>
        <dbReference type="UniProtKB" id="P16014"/>
    </source>
</evidence>
<evidence type="ECO:0000255" key="5"/>
<evidence type="ECO:0000256" key="6">
    <source>
        <dbReference type="SAM" id="MobiDB-lite"/>
    </source>
</evidence>
<evidence type="ECO:0000269" key="7">
    <source>
    </source>
</evidence>
<evidence type="ECO:0000269" key="8">
    <source>
    </source>
</evidence>
<evidence type="ECO:0000269" key="9">
    <source>
    </source>
</evidence>
<evidence type="ECO:0000269" key="10">
    <source>
    </source>
</evidence>
<evidence type="ECO:0000269" key="11">
    <source>
    </source>
</evidence>
<evidence type="ECO:0000269" key="12">
    <source>
    </source>
</evidence>
<evidence type="ECO:0000305" key="13"/>
<evidence type="ECO:0000305" key="14">
    <source>
    </source>
</evidence>
<accession>P23389</accession>
<accession>O02707</accession>
<proteinExistence type="evidence at protein level"/>
<comment type="function">
    <text>Secretogranin-1 is a neuroendocrine secretory granule protein, which may be the precursor for other biologically active peptides. The 16 pairs of basic AA distributed throughout its sequence may be used as proteolytic cleavage sites.</text>
</comment>
<comment type="function">
    <text>Secretolytin has antibacterial activity.</text>
</comment>
<comment type="subunit">
    <text evidence="7">Interacts with ITPR1 in the secretory granules.</text>
</comment>
<comment type="subcellular location">
    <molecule>Secretogranin-1</molecule>
    <subcellularLocation>
        <location evidence="7">Cytoplasmic vesicle</location>
        <location evidence="7">Secretory vesicle membrane</location>
        <topology>Peripheral membrane protein</topology>
        <orientation>Lumenal side</orientation>
    </subcellularLocation>
    <text>Neuroendocrine and endocrine secretory granules. Found to be membrane bound inside the secretory vesicles. The N-terminal region exhibits pH-dependent membrane-binding activity, binds to the membrane at intravesicular pH (5.5) and freed when the pH is near to physiological pH.</text>
</comment>
<comment type="subcellular location">
    <molecule>Peptide BAM-1745</molecule>
    <subcellularLocation>
        <location>Secreted</location>
    </subcellularLocation>
</comment>
<comment type="subcellular location">
    <molecule>Secretolytin</molecule>
    <subcellularLocation>
        <location>Secreted</location>
    </subcellularLocation>
</comment>
<comment type="PTM">
    <text evidence="8">O-glycosylated by the trisaccharide, GalNAc-Gal-NeuAc, on 2 sites in the N-terminal. May be glycated.</text>
</comment>
<comment type="PTM">
    <text evidence="8">Extensively phosphorylated.</text>
</comment>
<comment type="PTM">
    <text evidence="12">Differentially processed on numerous sites throughout the sequence depending on tissue type.</text>
</comment>
<comment type="mass spectrometry" mass="1746.0" method="MALDI" evidence="8">
    <molecule>Peptide BAM-1745</molecule>
    <text>Pyroglutamate.</text>
</comment>
<comment type="mass spectrometry" mass="1746.0" method="FAB" evidence="9">
    <molecule>Peptide BAM-1745</molecule>
    <text>Pyroglutamate.</text>
</comment>
<comment type="similarity">
    <text evidence="13">Belongs to the chromogranin/secretogranin protein family.</text>
</comment>
<reference key="1">
    <citation type="journal article" date="1991" name="Biochim. Biophys. Acta">
        <title>Primary structure of bovine chromogranin B deduced from cDNA sequence.</title>
        <authorList>
            <person name="Bauer J.W."/>
            <person name="Fischer-Colbrie R."/>
        </authorList>
    </citation>
    <scope>NUCLEOTIDE SEQUENCE [MRNA]</scope>
    <scope>VARIANT VAL-597</scope>
    <source>
        <tissue>Adrenal chromaffin</tissue>
    </source>
</reference>
<reference key="2">
    <citation type="journal article" date="1997" name="FEBS Lett.">
        <title>Identification of the secretory vesicle membrane binding region of chromogranin B.</title>
        <authorList>
            <person name="Yoo S.H."/>
            <person name="Kang Y.K."/>
        </authorList>
    </citation>
    <scope>NUCLEOTIDE SEQUENCE [MRNA]</scope>
    <source>
        <tissue>Adrenal medulla</tissue>
    </source>
</reference>
<reference key="3">
    <citation type="journal article" date="1992" name="Cell. Mol. Neurobiol.">
        <title>Nucleotide and deduced amino acid sequence of bovine adrenal medulla chromogranin B (secretogranin I).</title>
        <authorList>
            <person name="Grandy D.K."/>
            <person name="Leduc R."/>
            <person name="Makam H."/>
            <person name="Flanagan T."/>
            <person name="Diliberto E.J."/>
            <person name="Civelli O."/>
            <person name="Viveros O.H."/>
        </authorList>
    </citation>
    <scope>NUCLEOTIDE SEQUENCE [MRNA] OF 21-646</scope>
    <source>
        <tissue>Adrenal medulla</tissue>
    </source>
</reference>
<reference key="4">
    <citation type="journal article" date="1993" name="Biochim. Biophys. Acta">
        <title>pH-dependent binding of chromogranin B and secretory vesicle matrix proteins to the vesicle membrane.</title>
        <authorList>
            <person name="Yoo S.H."/>
        </authorList>
    </citation>
    <scope>PROTEIN SEQUENCE OF 239-244 AND 562-565</scope>
    <scope>SUBCELLULAR LOCATION</scope>
</reference>
<reference key="5">
    <citation type="journal article" date="1992" name="Biochim. Biophys. Acta">
        <title>Mass spectrometric characterization of bovine chromaffin granule peptides related to chromogranin B.</title>
        <authorList>
            <person name="Dillen L."/>
            <person name="Boel S."/>
            <person name="De Potter W.P."/>
            <person name="Claeys M."/>
        </authorList>
    </citation>
    <scope>PROTEIN SEQUENCE OF 567-580</scope>
    <scope>MASS SPECTROMETRY</scope>
</reference>
<reference key="6">
    <citation type="journal article" date="1990" name="Cell. Mol. Neurobiol.">
        <title>A novel 1745-dalton pyroglutamyl peptide derived from chromogranin B is in the bovine adrenomedullary chromaffin vesicle.</title>
        <authorList>
            <person name="Flanagan T."/>
            <person name="Taylor L."/>
            <person name="Poulter L."/>
            <person name="Viveros O.H."/>
            <person name="Diliberto E.J. Jr."/>
        </authorList>
    </citation>
    <scope>PROTEIN SEQUENCE OF 567-580</scope>
    <scope>PYROGLUTAMATE FORMATION AT GLN-567</scope>
</reference>
<reference key="7">
    <citation type="journal article" date="1995" name="Eur. J. Biochem.">
        <title>Processing of chromogranin B in bovine adrenal medulla. Identification of secretolytin, the endogenous C-terminal fragment of residues 614-626 with antibacterial activity.</title>
        <authorList>
            <person name="Strub J.-M."/>
            <person name="Garcia-Sablone P."/>
            <person name="Lonning K."/>
            <person name="Taupenot L."/>
            <person name="Hubert P."/>
            <person name="van Dorsselaer A."/>
            <person name="Aunis D."/>
            <person name="Metz-Boutigue M.-H."/>
        </authorList>
    </citation>
    <scope>PROTEIN SEQUENCE OF 21-35; 86-99; 127-145; 146-161; 162-176; 186-194; 235-243; 276-289; 308-314; 340-347; 325-335; 430-444; 584-604 AND 634-646</scope>
    <scope>PYROGLUTAMATE FORMATION AT GLN-634</scope>
    <scope>PROTEOLYTIC PROCESSING</scope>
    <scope>MASS SPECTROMETRY</scope>
    <scope>CHARACTERIZATION OF SECRETOLYTIN</scope>
    <source>
        <tissue>Adrenal chromaffin</tissue>
    </source>
</reference>
<reference key="8">
    <citation type="journal article" date="2004" name="Proteomics">
        <title>Characterization and location of post-translational modifications on chromogranin B from bovine adrenal medullary chromaffin granules.</title>
        <authorList>
            <person name="Gasnier C."/>
            <person name="Lugardon K."/>
            <person name="Ruh O."/>
            <person name="Strub J.-M."/>
            <person name="Aunis D."/>
            <person name="Metz-Boutigue M.H."/>
        </authorList>
    </citation>
    <scope>PROTEIN SEQUENCE OF 21-211; 276-289; 300-409; 427-445; 476-516; 530-542; 567-580 AND 584-646</scope>
    <scope>PHOSPHORYLATION AT SER-168; SER-351; SER-354; SER-584; SER-593 AND SER-598</scope>
    <scope>PYROGLUTAMATE FORMATION AT GLN-476 AND GLN-567</scope>
    <scope>SULFATION AT TYR-441 AND TYR-535</scope>
    <scope>GLYCOSYLATION</scope>
    <scope>STRUCTURE OF CARBOHYDRATES</scope>
    <scope>MASS SPECTROMETRY</scope>
    <scope>VARIANT VAL-597</scope>
</reference>
<reference key="9">
    <citation type="journal article" date="1996" name="FEBS Lett.">
        <title>Antibacterial activity of secretolytin, a chromogranin B-derived peptide (614-626), is correlated with peptide structure.</title>
        <authorList>
            <person name="Strub J.-M."/>
            <person name="Hubert P."/>
            <person name="Nullans G."/>
            <person name="Aunis D."/>
            <person name="Metz-Boutigue M.-H."/>
        </authorList>
    </citation>
    <scope>CHARACTERIZATION OF SECRETOLYTIN</scope>
</reference>
<reference key="10">
    <citation type="journal article" date="2001" name="J. Biol. Chem.">
        <title>Localization of three types of the inositol 1,4,5-trisphosphate receptor/Ca2+ channel in the secretory granules and coupling with the Ca2+ storage proteins chromogranins A and B.</title>
        <authorList>
            <person name="Yoo S.H."/>
            <person name="Oh Y.S."/>
            <person name="Kang M.K."/>
            <person name="Huh Y.H."/>
            <person name="So S.H."/>
            <person name="Park H.S."/>
            <person name="Park H.Y."/>
        </authorList>
    </citation>
    <scope>INTERACTION WITH ITPR1</scope>
    <scope>SUBCELLULAR LOCATION</scope>
    <source>
        <tissue>Adrenal medulla</tissue>
    </source>
</reference>
<sequence length="646" mass="73340">MQPAALLGLLGATVVAAVSSMPVDIRNHNEEVVTHCIIEVLSNALLKSSAPPITPECRQVLKKNGKELKNEEKSENENTRFEVRLLRDPADTSEAPGLSSREDSGEGDAQVPTVADTESGGHSRERAGEPPGSQVAKEAKTRYSKSEGQNREEEMVKYQKRERGEVGSEERLSEGPGKAQTAFLNQRNQTPAKKEELVSRYDTQSARGLEKSHSRERSSQESGEETKSQENWPQELQRHPEGQEAPGESEEDASPEVDKRHSRPRHHHGRSRPDRSSQEGNPPLEEESHVGTGNSDEEKARHPAHFRALEEGAEYGEEVRRHSAAQAPGDLQGARFGGRGRGEHQALRRPSEESLEQENKRHGLSPDLNMAQGYSEESEEERGPAPGPSYRARGGEAAAYSTLGQTDEKRFLGETHHRVQESQRDKARRRLPGELRNYLDYGEEKGEEAARGKWQPQGDPRDADENREEARLRGKQYAPHHITEKRLGELLNPFYDPSQWKSSRFERKDPMDDSFLEGEEENGLTLNEKNFFPEYNYDWWEKKPFEEDVNWGYEKRNPVPKLDLKRQYDRVAELDQLLHYRKKSAEFPDFYDSEEQMSPQHTAENEEEKAGQGVLTEEEEKELENLAAMDLELQKIAEKFSGTRRG</sequence>
<name>SCG1_BOVIN</name>
<organism>
    <name type="scientific">Bos taurus</name>
    <name type="common">Bovine</name>
    <dbReference type="NCBI Taxonomy" id="9913"/>
    <lineage>
        <taxon>Eukaryota</taxon>
        <taxon>Metazoa</taxon>
        <taxon>Chordata</taxon>
        <taxon>Craniata</taxon>
        <taxon>Vertebrata</taxon>
        <taxon>Euteleostomi</taxon>
        <taxon>Mammalia</taxon>
        <taxon>Eutheria</taxon>
        <taxon>Laurasiatheria</taxon>
        <taxon>Artiodactyla</taxon>
        <taxon>Ruminantia</taxon>
        <taxon>Pecora</taxon>
        <taxon>Bovidae</taxon>
        <taxon>Bovinae</taxon>
        <taxon>Bos</taxon>
    </lineage>
</organism>
<keyword id="KW-0165">Cleavage on pair of basic residues</keyword>
<keyword id="KW-0968">Cytoplasmic vesicle</keyword>
<keyword id="KW-0903">Direct protein sequencing</keyword>
<keyword id="KW-1015">Disulfide bond</keyword>
<keyword id="KW-0325">Glycoprotein</keyword>
<keyword id="KW-0472">Membrane</keyword>
<keyword id="KW-0597">Phosphoprotein</keyword>
<keyword id="KW-0654">Proteoglycan</keyword>
<keyword id="KW-0873">Pyrrolidone carboxylic acid</keyword>
<keyword id="KW-1185">Reference proteome</keyword>
<keyword id="KW-0964">Secreted</keyword>
<keyword id="KW-0732">Signal</keyword>
<keyword id="KW-0765">Sulfation</keyword>
<protein>
    <recommendedName>
        <fullName>Secretogranin-1</fullName>
    </recommendedName>
    <alternativeName>
        <fullName>Chromogranin-B</fullName>
        <shortName>CgB</shortName>
    </alternativeName>
    <alternativeName>
        <fullName>Secretogranin I</fullName>
        <shortName>SgI</shortName>
    </alternativeName>
    <component>
        <recommendedName>
            <fullName>PE-11</fullName>
        </recommendedName>
    </component>
    <component>
        <recommendedName>
            <fullName>Secretogranin-1(476-566)</fullName>
        </recommendedName>
    </component>
    <component>
        <recommendedName>
            <fullName>Peptide BAM-1745</fullName>
        </recommendedName>
    </component>
    <component>
        <recommendedName>
            <fullName>Secretolytin</fullName>
        </recommendedName>
    </component>
    <component>
        <recommendedName>
            <fullName>CCB peptide</fullName>
        </recommendedName>
    </component>
</protein>
<feature type="signal peptide" evidence="8 12">
    <location>
        <begin position="1"/>
        <end position="20"/>
    </location>
</feature>
<feature type="chain" id="PRO_0000005434" description="Secretogranin-1">
    <location>
        <begin position="21"/>
        <end position="646"/>
    </location>
</feature>
<feature type="chain" id="PRO_0000326263" description="Secretogranin-1(476-566)">
    <location>
        <begin position="476"/>
        <end position="566"/>
    </location>
</feature>
<feature type="peptide" id="PRO_0000432729" description="PE-11" evidence="4">
    <location>
        <begin position="544"/>
        <end position="554"/>
    </location>
</feature>
<feature type="peptide" id="PRO_0000005436" description="Peptide BAM-1745">
    <location>
        <begin position="567"/>
        <end position="580"/>
    </location>
</feature>
<feature type="peptide" id="PRO_0000411987" description="CCB peptide">
    <location>
        <begin position="584"/>
        <end position="646"/>
    </location>
</feature>
<feature type="peptide" id="PRO_0000005437" description="Secretolytin">
    <location>
        <begin position="634"/>
        <end position="646"/>
    </location>
</feature>
<feature type="region of interest" description="Disordered" evidence="6">
    <location>
        <begin position="67"/>
        <end position="483"/>
    </location>
</feature>
<feature type="region of interest" description="Disordered" evidence="6">
    <location>
        <begin position="588"/>
        <end position="620"/>
    </location>
</feature>
<feature type="compositionally biased region" description="Basic and acidic residues" evidence="6">
    <location>
        <begin position="67"/>
        <end position="90"/>
    </location>
</feature>
<feature type="compositionally biased region" description="Basic and acidic residues" evidence="6">
    <location>
        <begin position="119"/>
        <end position="128"/>
    </location>
</feature>
<feature type="compositionally biased region" description="Basic and acidic residues" evidence="6">
    <location>
        <begin position="137"/>
        <end position="173"/>
    </location>
</feature>
<feature type="compositionally biased region" description="Polar residues" evidence="6">
    <location>
        <begin position="182"/>
        <end position="191"/>
    </location>
</feature>
<feature type="compositionally biased region" description="Basic and acidic residues" evidence="6">
    <location>
        <begin position="208"/>
        <end position="228"/>
    </location>
</feature>
<feature type="compositionally biased region" description="Basic residues" evidence="6">
    <location>
        <begin position="260"/>
        <end position="270"/>
    </location>
</feature>
<feature type="compositionally biased region" description="Basic and acidic residues" evidence="6">
    <location>
        <begin position="340"/>
        <end position="361"/>
    </location>
</feature>
<feature type="compositionally biased region" description="Basic and acidic residues" evidence="6">
    <location>
        <begin position="406"/>
        <end position="425"/>
    </location>
</feature>
<feature type="compositionally biased region" description="Basic and acidic residues" evidence="6">
    <location>
        <begin position="442"/>
        <end position="451"/>
    </location>
</feature>
<feature type="compositionally biased region" description="Basic and acidic residues" evidence="6">
    <location>
        <begin position="459"/>
        <end position="472"/>
    </location>
</feature>
<feature type="site" description="Cleavage; major site">
    <location>
        <begin position="161"/>
        <end position="162"/>
    </location>
</feature>
<feature type="site" description="Cleavage; major site">
    <location>
        <begin position="275"/>
        <end position="276"/>
    </location>
</feature>
<feature type="site" description="Cleavage; major site">
    <location>
        <begin position="278"/>
        <end position="279"/>
    </location>
</feature>
<feature type="site" description="Cleavage; major site">
    <location>
        <begin position="324"/>
        <end position="325"/>
    </location>
</feature>
<feature type="site" description="Cleavage; major site">
    <location>
        <begin position="629"/>
        <end position="630"/>
    </location>
</feature>
<feature type="modified residue" description="Phosphoserine" evidence="5">
    <location>
        <position position="74"/>
    </location>
</feature>
<feature type="modified residue" description="Phosphothreonine" evidence="13">
    <location>
        <position position="79"/>
    </location>
</feature>
<feature type="modified residue" description="Phosphothreonine" evidence="5">
    <location>
        <position position="92"/>
    </location>
</feature>
<feature type="modified residue" description="Phosphoserine" evidence="2">
    <location>
        <position position="93"/>
    </location>
</feature>
<feature type="modified residue" description="Phosphoserine" evidence="5">
    <location>
        <position position="99"/>
    </location>
</feature>
<feature type="modified residue" description="Phosphoserine" evidence="5">
    <location>
        <position position="100"/>
    </location>
</feature>
<feature type="modified residue" description="Phosphoserine" evidence="5">
    <location>
        <position position="104"/>
    </location>
</feature>
<feature type="modified residue" description="Phosphoserine" evidence="3">
    <location>
        <position position="123"/>
    </location>
</feature>
<feature type="modified residue" description="Phosphoserine" evidence="13">
    <location>
        <position position="146"/>
    </location>
</feature>
<feature type="modified residue" description="Phosphoserine" evidence="8">
    <location>
        <position position="168"/>
    </location>
</feature>
<feature type="modified residue" description="Phosphoserine" evidence="4">
    <location>
        <position position="205"/>
    </location>
</feature>
<feature type="modified residue" description="Phosphoserine" evidence="5">
    <location>
        <position position="276"/>
    </location>
</feature>
<feature type="modified residue" description="Phosphoserine" evidence="5">
    <location>
        <position position="277"/>
    </location>
</feature>
<feature type="modified residue" description="Phosphoserine" evidence="5">
    <location>
        <position position="295"/>
    </location>
</feature>
<feature type="modified residue" description="Sulfotyrosine" evidence="2">
    <location>
        <position position="315"/>
    </location>
</feature>
<feature type="modified residue" description="Phosphoserine" evidence="8">
    <location>
        <position position="351"/>
    </location>
</feature>
<feature type="modified residue" description="Phosphoserine" evidence="8">
    <location>
        <position position="354"/>
    </location>
</feature>
<feature type="modified residue" description="Phosphotyrosine" evidence="3">
    <location>
        <position position="374"/>
    </location>
</feature>
<feature type="modified residue" description="Phosphoserine" evidence="5">
    <location>
        <position position="375"/>
    </location>
</feature>
<feature type="modified residue" description="Phosphoserine" evidence="3 5">
    <location>
        <position position="378"/>
    </location>
</feature>
<feature type="modified residue" description="Sulfotyrosine" evidence="14">
    <location>
        <position position="441"/>
    </location>
</feature>
<feature type="modified residue" description="Pyrrolidone carboxylic acid; in secretogranin-1(476-566)" evidence="8">
    <location>
        <position position="476"/>
    </location>
</feature>
<feature type="modified residue" description="Phosphoserine" evidence="5">
    <location>
        <position position="502"/>
    </location>
</feature>
<feature type="modified residue" description="Phosphoserine" evidence="5">
    <location>
        <position position="503"/>
    </location>
</feature>
<feature type="modified residue" description="Phosphoserine" evidence="5">
    <location>
        <position position="514"/>
    </location>
</feature>
<feature type="modified residue" description="Sulfotyrosine" evidence="14">
    <location>
        <position position="535"/>
    </location>
</feature>
<feature type="modified residue" description="Pyrrolidone carboxylic acid; in peptide BAM-1745" evidence="8 10">
    <location>
        <position position="567"/>
    </location>
</feature>
<feature type="modified residue" description="Phosphoserine" evidence="8">
    <location>
        <position position="584"/>
    </location>
</feature>
<feature type="modified residue" description="Sulfotyrosine" evidence="2">
    <location>
        <position position="591"/>
    </location>
</feature>
<feature type="modified residue" description="Phosphoserine" evidence="8">
    <location>
        <position position="593"/>
    </location>
</feature>
<feature type="modified residue" description="Phosphoserine" evidence="8">
    <location>
        <position position="598"/>
    </location>
</feature>
<feature type="modified residue" description="Pyrrolidone carboxylic acid; in Secretolytin; partial" evidence="12">
    <location>
        <position position="634"/>
    </location>
</feature>
<feature type="glycosylation site" description="O-linked (Xyl...) (chondroitin sulfate) serine" evidence="3">
    <location>
        <position position="93"/>
    </location>
</feature>
<feature type="glycosylation site" description="O-linked (GalNAc...) threonine" evidence="14">
    <location>
        <position position="113"/>
    </location>
</feature>
<feature type="glycosylation site" description="O-linked (GalNAc...) threonine" evidence="14">
    <location>
        <position position="190"/>
    </location>
</feature>
<feature type="glycosylation site" description="O-linked (Xyl...) (chondroitin sulfate) serine" evidence="3">
    <location>
        <position position="222"/>
    </location>
</feature>
<feature type="disulfide bond" evidence="1">
    <location>
        <begin position="36"/>
        <end position="57"/>
    </location>
</feature>
<feature type="sequence variant" evidence="8 11">
    <original>M</original>
    <variation>V</variation>
    <location>
        <position position="597"/>
    </location>
</feature>
<feature type="sequence conflict" description="In Ref. 1; CAA38846." evidence="13" ref="1">
    <original>N</original>
    <variation>S</variation>
    <location>
        <position position="64"/>
    </location>
</feature>
<feature type="sequence conflict" description="In Ref. 2; AAC48720." evidence="13" ref="2">
    <original>N</original>
    <variation>D</variation>
    <location>
        <position position="70"/>
    </location>
</feature>
<feature type="sequence conflict" description="In Ref. 3; CAA39109." evidence="13" ref="3">
    <original>SEAPGL</original>
    <variation>FRSPRAS</variation>
    <location>
        <begin position="93"/>
        <end position="98"/>
    </location>
</feature>
<feature type="sequence conflict" description="In Ref. 2; AAC48720." evidence="13" ref="2">
    <original>T</original>
    <variation>M</variation>
    <location>
        <position position="181"/>
    </location>
</feature>
<feature type="sequence conflict" description="In Ref. 2; AAC48720." evidence="13" ref="2">
    <original>H</original>
    <variation>R</variation>
    <location>
        <position position="261"/>
    </location>
</feature>
<feature type="sequence conflict" description="In Ref. 2; AAC48720." evidence="13" ref="2">
    <original>P</original>
    <variation>R</variation>
    <location>
        <position position="386"/>
    </location>
</feature>
<feature type="sequence conflict" description="In Ref. 3; CAA39109." evidence="13" ref="3">
    <original>H</original>
    <variation>L</variation>
    <location>
        <position position="481"/>
    </location>
</feature>
<dbReference type="EMBL" id="X55027">
    <property type="protein sequence ID" value="CAA38846.1"/>
    <property type="molecule type" value="mRNA"/>
</dbReference>
<dbReference type="EMBL" id="U88551">
    <property type="protein sequence ID" value="AAC48720.1"/>
    <property type="molecule type" value="mRNA"/>
</dbReference>
<dbReference type="EMBL" id="X55489">
    <property type="protein sequence ID" value="CAA39109.1"/>
    <property type="molecule type" value="mRNA"/>
</dbReference>
<dbReference type="PIR" id="S15901">
    <property type="entry name" value="S15901"/>
</dbReference>
<dbReference type="RefSeq" id="NP_851349.1">
    <property type="nucleotide sequence ID" value="NM_181006.2"/>
</dbReference>
<dbReference type="SMR" id="P23389"/>
<dbReference type="FunCoup" id="P23389">
    <property type="interactions" value="480"/>
</dbReference>
<dbReference type="MINT" id="P23389"/>
<dbReference type="STRING" id="9913.ENSBTAP00000015645"/>
<dbReference type="GlyCosmos" id="P23389">
    <property type="glycosylation" value="2 sites, No reported glycans"/>
</dbReference>
<dbReference type="GlyGen" id="P23389">
    <property type="glycosylation" value="4 sites"/>
</dbReference>
<dbReference type="iPTMnet" id="P23389"/>
<dbReference type="PaxDb" id="9913-ENSBTAP00000015645"/>
<dbReference type="GeneID" id="281071"/>
<dbReference type="KEGG" id="bta:281071"/>
<dbReference type="CTD" id="1114"/>
<dbReference type="eggNOG" id="ENOG502QRBF">
    <property type="taxonomic scope" value="Eukaryota"/>
</dbReference>
<dbReference type="HOGENOM" id="CLU_026095_0_0_1"/>
<dbReference type="InParanoid" id="P23389"/>
<dbReference type="OrthoDB" id="9907623at2759"/>
<dbReference type="TreeFam" id="TF336596"/>
<dbReference type="Proteomes" id="UP000009136">
    <property type="component" value="Unplaced"/>
</dbReference>
<dbReference type="GO" id="GO:0005615">
    <property type="term" value="C:extracellular space"/>
    <property type="evidence" value="ECO:0000318"/>
    <property type="project" value="GO_Central"/>
</dbReference>
<dbReference type="GO" id="GO:0030141">
    <property type="term" value="C:secretory granule"/>
    <property type="evidence" value="ECO:0000314"/>
    <property type="project" value="UniProtKB"/>
</dbReference>
<dbReference type="GO" id="GO:0030658">
    <property type="term" value="C:transport vesicle membrane"/>
    <property type="evidence" value="ECO:0007669"/>
    <property type="project" value="UniProtKB-SubCell"/>
</dbReference>
<dbReference type="InterPro" id="IPR001819">
    <property type="entry name" value="Chromogranin_AB"/>
</dbReference>
<dbReference type="InterPro" id="IPR018054">
    <property type="entry name" value="Chromogranin_CS"/>
</dbReference>
<dbReference type="InterPro" id="IPR001990">
    <property type="entry name" value="Granin"/>
</dbReference>
<dbReference type="PANTHER" id="PTHR10583">
    <property type="entry name" value="CHROMOGRANIN"/>
    <property type="match status" value="1"/>
</dbReference>
<dbReference type="PANTHER" id="PTHR10583:SF4">
    <property type="entry name" value="SECRETOGRANIN-1"/>
    <property type="match status" value="1"/>
</dbReference>
<dbReference type="Pfam" id="PF01271">
    <property type="entry name" value="Granin"/>
    <property type="match status" value="1"/>
</dbReference>
<dbReference type="PRINTS" id="PR00659">
    <property type="entry name" value="CHROMOGRANIN"/>
</dbReference>
<dbReference type="PROSITE" id="PS00422">
    <property type="entry name" value="GRANINS_1"/>
    <property type="match status" value="1"/>
</dbReference>
<dbReference type="PROSITE" id="PS00423">
    <property type="entry name" value="GRANINS_2"/>
    <property type="match status" value="1"/>
</dbReference>
<gene>
    <name type="primary">CHGB</name>
</gene>